<accession>P47657</accession>
<evidence type="ECO:0000255" key="1">
    <source>
        <dbReference type="HAMAP-Rule" id="MF_01366"/>
    </source>
</evidence>
<evidence type="ECO:0000305" key="2"/>
<organism>
    <name type="scientific">Mycoplasma genitalium (strain ATCC 33530 / DSM 19775 / NCTC 10195 / G37)</name>
    <name type="common">Mycoplasmoides genitalium</name>
    <dbReference type="NCBI Taxonomy" id="243273"/>
    <lineage>
        <taxon>Bacteria</taxon>
        <taxon>Bacillati</taxon>
        <taxon>Mycoplasmatota</taxon>
        <taxon>Mycoplasmoidales</taxon>
        <taxon>Mycoplasmoidaceae</taxon>
        <taxon>Mycoplasmoides</taxon>
    </lineage>
</organism>
<name>RL13_MYCGE</name>
<keyword id="KW-1185">Reference proteome</keyword>
<keyword id="KW-0687">Ribonucleoprotein</keyword>
<keyword id="KW-0689">Ribosomal protein</keyword>
<proteinExistence type="inferred from homology"/>
<sequence>MQKTSMLTKEEAIKNRKWYLVDASGLVLGKLAVKAANLIRGKNKANFTPNQDCGDHLIIINSDQVVLTGNKKDNEFWYHHSQYMGGIKKTSGRDMINKNSDKLVFNAVKGMLPDNRLSRRLITKVHVFKNDKHNMEAQKPTLLNWS</sequence>
<gene>
    <name evidence="1" type="primary">rplM</name>
    <name evidence="1" type="synonym">rpl13</name>
    <name type="ordered locus">MG418</name>
</gene>
<reference key="1">
    <citation type="journal article" date="1995" name="Science">
        <title>The minimal gene complement of Mycoplasma genitalium.</title>
        <authorList>
            <person name="Fraser C.M."/>
            <person name="Gocayne J.D."/>
            <person name="White O."/>
            <person name="Adams M.D."/>
            <person name="Clayton R.A."/>
            <person name="Fleischmann R.D."/>
            <person name="Bult C.J."/>
            <person name="Kerlavage A.R."/>
            <person name="Sutton G.G."/>
            <person name="Kelley J.M."/>
            <person name="Fritchman J.L."/>
            <person name="Weidman J.F."/>
            <person name="Small K.V."/>
            <person name="Sandusky M."/>
            <person name="Fuhrmann J.L."/>
            <person name="Nguyen D.T."/>
            <person name="Utterback T.R."/>
            <person name="Saudek D.M."/>
            <person name="Phillips C.A."/>
            <person name="Merrick J.M."/>
            <person name="Tomb J.-F."/>
            <person name="Dougherty B.A."/>
            <person name="Bott K.F."/>
            <person name="Hu P.-C."/>
            <person name="Lucier T.S."/>
            <person name="Peterson S.N."/>
            <person name="Smith H.O."/>
            <person name="Hutchison C.A. III"/>
            <person name="Venter J.C."/>
        </authorList>
    </citation>
    <scope>NUCLEOTIDE SEQUENCE [LARGE SCALE GENOMIC DNA]</scope>
    <source>
        <strain>ATCC 33530 / DSM 19775 / NCTC 10195 / G37</strain>
    </source>
</reference>
<reference key="2">
    <citation type="journal article" date="1993" name="J. Bacteriol.">
        <title>A survey of the Mycoplasma genitalium genome by using random sequencing.</title>
        <authorList>
            <person name="Peterson S.N."/>
            <person name="Hu P.-C."/>
            <person name="Bott K.F."/>
            <person name="Hutchison C.A. III"/>
        </authorList>
    </citation>
    <scope>NUCLEOTIDE SEQUENCE [GENOMIC DNA] OF 108-146</scope>
    <source>
        <strain>ATCC 33530 / DSM 19775 / NCTC 10195 / G37</strain>
    </source>
</reference>
<dbReference type="EMBL" id="L43967">
    <property type="protein sequence ID" value="AAC71644.1"/>
    <property type="molecule type" value="Genomic_DNA"/>
</dbReference>
<dbReference type="EMBL" id="U01744">
    <property type="protein sequence ID" value="AAD10555.1"/>
    <property type="molecule type" value="Genomic_DNA"/>
</dbReference>
<dbReference type="PIR" id="B64246">
    <property type="entry name" value="B64246"/>
</dbReference>
<dbReference type="RefSeq" id="WP_010869476.1">
    <property type="nucleotide sequence ID" value="NC_000908.2"/>
</dbReference>
<dbReference type="SMR" id="P47657"/>
<dbReference type="FunCoup" id="P47657">
    <property type="interactions" value="218"/>
</dbReference>
<dbReference type="STRING" id="243273.MG_418"/>
<dbReference type="GeneID" id="88282601"/>
<dbReference type="KEGG" id="mge:MG_418"/>
<dbReference type="eggNOG" id="COG0102">
    <property type="taxonomic scope" value="Bacteria"/>
</dbReference>
<dbReference type="HOGENOM" id="CLU_082184_2_2_14"/>
<dbReference type="InParanoid" id="P47657"/>
<dbReference type="OrthoDB" id="9801330at2"/>
<dbReference type="BioCyc" id="MGEN243273:G1GJ2-513-MONOMER"/>
<dbReference type="Proteomes" id="UP000000807">
    <property type="component" value="Chromosome"/>
</dbReference>
<dbReference type="GO" id="GO:0022625">
    <property type="term" value="C:cytosolic large ribosomal subunit"/>
    <property type="evidence" value="ECO:0000318"/>
    <property type="project" value="GO_Central"/>
</dbReference>
<dbReference type="GO" id="GO:0005840">
    <property type="term" value="C:ribosome"/>
    <property type="evidence" value="ECO:0000318"/>
    <property type="project" value="GO_Central"/>
</dbReference>
<dbReference type="GO" id="GO:0003729">
    <property type="term" value="F:mRNA binding"/>
    <property type="evidence" value="ECO:0000318"/>
    <property type="project" value="GO_Central"/>
</dbReference>
<dbReference type="GO" id="GO:0003735">
    <property type="term" value="F:structural constituent of ribosome"/>
    <property type="evidence" value="ECO:0000318"/>
    <property type="project" value="GO_Central"/>
</dbReference>
<dbReference type="GO" id="GO:0017148">
    <property type="term" value="P:negative regulation of translation"/>
    <property type="evidence" value="ECO:0000318"/>
    <property type="project" value="GO_Central"/>
</dbReference>
<dbReference type="GO" id="GO:0006412">
    <property type="term" value="P:translation"/>
    <property type="evidence" value="ECO:0007669"/>
    <property type="project" value="UniProtKB-UniRule"/>
</dbReference>
<dbReference type="CDD" id="cd00392">
    <property type="entry name" value="Ribosomal_L13"/>
    <property type="match status" value="1"/>
</dbReference>
<dbReference type="Gene3D" id="3.90.1180.10">
    <property type="entry name" value="Ribosomal protein L13"/>
    <property type="match status" value="1"/>
</dbReference>
<dbReference type="HAMAP" id="MF_01366">
    <property type="entry name" value="Ribosomal_uL13"/>
    <property type="match status" value="1"/>
</dbReference>
<dbReference type="InterPro" id="IPR005822">
    <property type="entry name" value="Ribosomal_uL13"/>
</dbReference>
<dbReference type="InterPro" id="IPR005823">
    <property type="entry name" value="Ribosomal_uL13_bac-type"/>
</dbReference>
<dbReference type="InterPro" id="IPR023563">
    <property type="entry name" value="Ribosomal_uL13_CS"/>
</dbReference>
<dbReference type="InterPro" id="IPR036899">
    <property type="entry name" value="Ribosomal_uL13_sf"/>
</dbReference>
<dbReference type="NCBIfam" id="TIGR01066">
    <property type="entry name" value="rplM_bact"/>
    <property type="match status" value="1"/>
</dbReference>
<dbReference type="PANTHER" id="PTHR11545:SF2">
    <property type="entry name" value="LARGE RIBOSOMAL SUBUNIT PROTEIN UL13M"/>
    <property type="match status" value="1"/>
</dbReference>
<dbReference type="PANTHER" id="PTHR11545">
    <property type="entry name" value="RIBOSOMAL PROTEIN L13"/>
    <property type="match status" value="1"/>
</dbReference>
<dbReference type="Pfam" id="PF00572">
    <property type="entry name" value="Ribosomal_L13"/>
    <property type="match status" value="1"/>
</dbReference>
<dbReference type="PIRSF" id="PIRSF002181">
    <property type="entry name" value="Ribosomal_L13"/>
    <property type="match status" value="1"/>
</dbReference>
<dbReference type="SUPFAM" id="SSF52161">
    <property type="entry name" value="Ribosomal protein L13"/>
    <property type="match status" value="1"/>
</dbReference>
<dbReference type="PROSITE" id="PS00783">
    <property type="entry name" value="RIBOSOMAL_L13"/>
    <property type="match status" value="1"/>
</dbReference>
<protein>
    <recommendedName>
        <fullName evidence="1">Large ribosomal subunit protein uL13</fullName>
    </recommendedName>
    <alternativeName>
        <fullName evidence="2">50S ribosomal protein L13</fullName>
    </alternativeName>
</protein>
<comment type="function">
    <text evidence="1">This protein is one of the early assembly proteins of the 50S ribosomal subunit, although it is not seen to bind rRNA by itself. It is important during the early stages of 50S assembly.</text>
</comment>
<comment type="subunit">
    <text evidence="1">Part of the 50S ribosomal subunit.</text>
</comment>
<comment type="similarity">
    <text evidence="1">Belongs to the universal ribosomal protein uL13 family.</text>
</comment>
<feature type="chain" id="PRO_0000133741" description="Large ribosomal subunit protein uL13">
    <location>
        <begin position="1"/>
        <end position="146"/>
    </location>
</feature>